<dbReference type="EMBL" id="CP000903">
    <property type="protein sequence ID" value="ABY44955.1"/>
    <property type="molecule type" value="Genomic_DNA"/>
</dbReference>
<dbReference type="RefSeq" id="WP_012261621.1">
    <property type="nucleotide sequence ID" value="NC_010184.1"/>
</dbReference>
<dbReference type="SMR" id="A9VUC1"/>
<dbReference type="KEGG" id="bwe:BcerKBAB4_3786"/>
<dbReference type="eggNOG" id="COG4493">
    <property type="taxonomic scope" value="Bacteria"/>
</dbReference>
<dbReference type="HOGENOM" id="CLU_096059_0_0_9"/>
<dbReference type="Proteomes" id="UP000002154">
    <property type="component" value="Chromosome"/>
</dbReference>
<dbReference type="Gene3D" id="3.30.930.20">
    <property type="entry name" value="Protein of unknown function DUF1054"/>
    <property type="match status" value="1"/>
</dbReference>
<dbReference type="HAMAP" id="MF_01851">
    <property type="entry name" value="UPF0637"/>
    <property type="match status" value="1"/>
</dbReference>
<dbReference type="InterPro" id="IPR009403">
    <property type="entry name" value="UPF0637"/>
</dbReference>
<dbReference type="InterPro" id="IPR053707">
    <property type="entry name" value="UPF0637_domain_sf"/>
</dbReference>
<dbReference type="Pfam" id="PF06335">
    <property type="entry name" value="DUF1054"/>
    <property type="match status" value="1"/>
</dbReference>
<dbReference type="PIRSF" id="PIRSF021332">
    <property type="entry name" value="DUF1054"/>
    <property type="match status" value="1"/>
</dbReference>
<dbReference type="SUPFAM" id="SSF142913">
    <property type="entry name" value="YktB/PF0168-like"/>
    <property type="match status" value="1"/>
</dbReference>
<feature type="chain" id="PRO_0000348301" description="UPF0637 protein BcerKBAB4_3786">
    <location>
        <begin position="1"/>
        <end position="208"/>
    </location>
</feature>
<reference key="1">
    <citation type="journal article" date="2008" name="Chem. Biol. Interact.">
        <title>Extending the Bacillus cereus group genomics to putative food-borne pathogens of different toxicity.</title>
        <authorList>
            <person name="Lapidus A."/>
            <person name="Goltsman E."/>
            <person name="Auger S."/>
            <person name="Galleron N."/>
            <person name="Segurens B."/>
            <person name="Dossat C."/>
            <person name="Land M.L."/>
            <person name="Broussolle V."/>
            <person name="Brillard J."/>
            <person name="Guinebretiere M.-H."/>
            <person name="Sanchis V."/>
            <person name="Nguen-the C."/>
            <person name="Lereclus D."/>
            <person name="Richardson P."/>
            <person name="Wincker P."/>
            <person name="Weissenbach J."/>
            <person name="Ehrlich S.D."/>
            <person name="Sorokin A."/>
        </authorList>
    </citation>
    <scope>NUCLEOTIDE SEQUENCE [LARGE SCALE GENOMIC DNA]</scope>
    <source>
        <strain>KBAB4</strain>
    </source>
</reference>
<sequence>MTLQTFTSTDFEVFTVDGLEERMSAIKTNIHPKLEALGEQFAEYLSQQTDESFFYHVAKHARRKVNPPNDTWVAFSTNKRGYKMLPHFQIGLWGTHAFIYFGLIYECPQKVETAHAFLEHLNDLKTNIPNDFVWSIDHTKPGVKLHKTLETEDLQKMIERLATVKKAELLVGIHISPEEFSAMTNEQFLAKIESTMQPLLPLYALCNR</sequence>
<comment type="similarity">
    <text evidence="1">Belongs to the UPF0637 family.</text>
</comment>
<proteinExistence type="inferred from homology"/>
<gene>
    <name type="ordered locus">BcerKBAB4_3786</name>
</gene>
<accession>A9VUC1</accession>
<name>Y3786_BACMK</name>
<organism>
    <name type="scientific">Bacillus mycoides (strain KBAB4)</name>
    <name type="common">Bacillus weihenstephanensis</name>
    <dbReference type="NCBI Taxonomy" id="315730"/>
    <lineage>
        <taxon>Bacteria</taxon>
        <taxon>Bacillati</taxon>
        <taxon>Bacillota</taxon>
        <taxon>Bacilli</taxon>
        <taxon>Bacillales</taxon>
        <taxon>Bacillaceae</taxon>
        <taxon>Bacillus</taxon>
        <taxon>Bacillus cereus group</taxon>
    </lineage>
</organism>
<evidence type="ECO:0000255" key="1">
    <source>
        <dbReference type="HAMAP-Rule" id="MF_01851"/>
    </source>
</evidence>
<protein>
    <recommendedName>
        <fullName evidence="1">UPF0637 protein BcerKBAB4_3786</fullName>
    </recommendedName>
</protein>